<keyword id="KW-0349">Heme</keyword>
<keyword id="KW-0408">Iron</keyword>
<keyword id="KW-0479">Metal-binding</keyword>
<keyword id="KW-0561">Oxygen transport</keyword>
<keyword id="KW-0813">Transport</keyword>
<feature type="chain" id="PRO_0000053178" description="Hemoglobin subunit deltaH">
    <location>
        <begin position="1"/>
        <end position="147"/>
    </location>
</feature>
<feature type="domain" description="Globin" evidence="1">
    <location>
        <begin position="3"/>
        <end position="147"/>
    </location>
</feature>
<feature type="binding site" description="distal binding residue">
    <location>
        <position position="64"/>
    </location>
    <ligand>
        <name>heme b</name>
        <dbReference type="ChEBI" id="CHEBI:60344"/>
    </ligand>
    <ligandPart>
        <name>Fe</name>
        <dbReference type="ChEBI" id="CHEBI:18248"/>
    </ligandPart>
</feature>
<feature type="binding site" description="proximal binding residue">
    <location>
        <position position="93"/>
    </location>
    <ligand>
        <name>heme b</name>
        <dbReference type="ChEBI" id="CHEBI:60344"/>
    </ligand>
    <ligandPart>
        <name>Fe</name>
        <dbReference type="ChEBI" id="CHEBI:18248"/>
    </ligandPart>
</feature>
<reference key="1">
    <citation type="submission" date="2005-06" db="EMBL/GenBank/DDBJ databases">
        <title>Atypical molecular evolution of afrotherian and xenarthran beta-globin cluster genes.</title>
        <authorList>
            <person name="Sloan A.M."/>
            <person name="Campbell K.L."/>
        </authorList>
    </citation>
    <scope>NUCLEOTIDE SEQUENCE [GENOMIC DNA]</scope>
</reference>
<name>HBD_HETBR</name>
<sequence>MVRLTDSEKAEVVSLWSKVDEKIIGSEALGRLLVIYPWTQRFFEHFGDLSTADAIMKNPRVQAHGEKVLSSFGEGLNHLDNLRGTFAQLSELHCDELHVDPENFRLLGNILVVVLARHYGKEFTLEVQAACQKFVAGMANALAHKYH</sequence>
<dbReference type="EMBL" id="DQ091206">
    <property type="protein sequence ID" value="AAZ22679.1"/>
    <property type="molecule type" value="Genomic_DNA"/>
</dbReference>
<dbReference type="SMR" id="Q45XI5"/>
<dbReference type="GO" id="GO:0072562">
    <property type="term" value="C:blood microparticle"/>
    <property type="evidence" value="ECO:0007669"/>
    <property type="project" value="TreeGrafter"/>
</dbReference>
<dbReference type="GO" id="GO:0031838">
    <property type="term" value="C:haptoglobin-hemoglobin complex"/>
    <property type="evidence" value="ECO:0007669"/>
    <property type="project" value="TreeGrafter"/>
</dbReference>
<dbReference type="GO" id="GO:0005833">
    <property type="term" value="C:hemoglobin complex"/>
    <property type="evidence" value="ECO:0007669"/>
    <property type="project" value="InterPro"/>
</dbReference>
<dbReference type="GO" id="GO:0031720">
    <property type="term" value="F:haptoglobin binding"/>
    <property type="evidence" value="ECO:0007669"/>
    <property type="project" value="TreeGrafter"/>
</dbReference>
<dbReference type="GO" id="GO:0020037">
    <property type="term" value="F:heme binding"/>
    <property type="evidence" value="ECO:0007669"/>
    <property type="project" value="InterPro"/>
</dbReference>
<dbReference type="GO" id="GO:0031721">
    <property type="term" value="F:hemoglobin alpha binding"/>
    <property type="evidence" value="ECO:0007669"/>
    <property type="project" value="TreeGrafter"/>
</dbReference>
<dbReference type="GO" id="GO:0046872">
    <property type="term" value="F:metal ion binding"/>
    <property type="evidence" value="ECO:0007669"/>
    <property type="project" value="UniProtKB-KW"/>
</dbReference>
<dbReference type="GO" id="GO:0043177">
    <property type="term" value="F:organic acid binding"/>
    <property type="evidence" value="ECO:0007669"/>
    <property type="project" value="TreeGrafter"/>
</dbReference>
<dbReference type="GO" id="GO:0019825">
    <property type="term" value="F:oxygen binding"/>
    <property type="evidence" value="ECO:0007669"/>
    <property type="project" value="InterPro"/>
</dbReference>
<dbReference type="GO" id="GO:0005344">
    <property type="term" value="F:oxygen carrier activity"/>
    <property type="evidence" value="ECO:0007669"/>
    <property type="project" value="UniProtKB-KW"/>
</dbReference>
<dbReference type="GO" id="GO:0004601">
    <property type="term" value="F:peroxidase activity"/>
    <property type="evidence" value="ECO:0007669"/>
    <property type="project" value="TreeGrafter"/>
</dbReference>
<dbReference type="GO" id="GO:0042744">
    <property type="term" value="P:hydrogen peroxide catabolic process"/>
    <property type="evidence" value="ECO:0007669"/>
    <property type="project" value="TreeGrafter"/>
</dbReference>
<dbReference type="CDD" id="cd08925">
    <property type="entry name" value="Hb-beta-like"/>
    <property type="match status" value="1"/>
</dbReference>
<dbReference type="FunFam" id="1.10.490.10:FF:000001">
    <property type="entry name" value="Hemoglobin subunit beta"/>
    <property type="match status" value="1"/>
</dbReference>
<dbReference type="Gene3D" id="1.10.490.10">
    <property type="entry name" value="Globins"/>
    <property type="match status" value="1"/>
</dbReference>
<dbReference type="InterPro" id="IPR000971">
    <property type="entry name" value="Globin"/>
</dbReference>
<dbReference type="InterPro" id="IPR009050">
    <property type="entry name" value="Globin-like_sf"/>
</dbReference>
<dbReference type="InterPro" id="IPR012292">
    <property type="entry name" value="Globin/Proto"/>
</dbReference>
<dbReference type="InterPro" id="IPR002337">
    <property type="entry name" value="Hemoglobin_b"/>
</dbReference>
<dbReference type="InterPro" id="IPR050056">
    <property type="entry name" value="Hemoglobin_oxygen_transport"/>
</dbReference>
<dbReference type="PANTHER" id="PTHR11442">
    <property type="entry name" value="HEMOGLOBIN FAMILY MEMBER"/>
    <property type="match status" value="1"/>
</dbReference>
<dbReference type="PANTHER" id="PTHR11442:SF42">
    <property type="entry name" value="HEMOGLOBIN SUBUNIT BETA"/>
    <property type="match status" value="1"/>
</dbReference>
<dbReference type="Pfam" id="PF00042">
    <property type="entry name" value="Globin"/>
    <property type="match status" value="1"/>
</dbReference>
<dbReference type="PRINTS" id="PR00814">
    <property type="entry name" value="BETAHAEM"/>
</dbReference>
<dbReference type="SUPFAM" id="SSF46458">
    <property type="entry name" value="Globin-like"/>
    <property type="match status" value="1"/>
</dbReference>
<dbReference type="PROSITE" id="PS01033">
    <property type="entry name" value="GLOBIN"/>
    <property type="match status" value="1"/>
</dbReference>
<organism>
    <name type="scientific">Heterohyrax brucei</name>
    <name type="common">Yellow-spotted hyrax</name>
    <name type="synonym">Rock hyrax</name>
    <dbReference type="NCBI Taxonomy" id="77598"/>
    <lineage>
        <taxon>Eukaryota</taxon>
        <taxon>Metazoa</taxon>
        <taxon>Chordata</taxon>
        <taxon>Craniata</taxon>
        <taxon>Vertebrata</taxon>
        <taxon>Euteleostomi</taxon>
        <taxon>Mammalia</taxon>
        <taxon>Eutheria</taxon>
        <taxon>Afrotheria</taxon>
        <taxon>Hyracoidea</taxon>
        <taxon>Procaviidae</taxon>
        <taxon>Heterohyrax</taxon>
    </lineage>
</organism>
<protein>
    <recommendedName>
        <fullName>Hemoglobin subunit deltaH</fullName>
    </recommendedName>
    <alternativeName>
        <fullName>DeltaH-globin</fullName>
    </alternativeName>
    <alternativeName>
        <fullName>Hemoglobin deltaH chain</fullName>
    </alternativeName>
</protein>
<comment type="subunit">
    <text>Heterotetramer of two delta chains and two alpha chains.</text>
</comment>
<comment type="tissue specificity">
    <text>Red blood cells.</text>
</comment>
<comment type="similarity">
    <text evidence="1">Belongs to the globin family.</text>
</comment>
<evidence type="ECO:0000255" key="1">
    <source>
        <dbReference type="PROSITE-ProRule" id="PRU00238"/>
    </source>
</evidence>
<accession>Q45XI5</accession>
<proteinExistence type="evidence at transcript level"/>